<accession>Q6ZJ05</accession>
<accession>A0A0P0XIV8</accession>
<reference key="1">
    <citation type="journal article" date="2005" name="Nature">
        <title>The map-based sequence of the rice genome.</title>
        <authorList>
            <consortium name="International rice genome sequencing project (IRGSP)"/>
        </authorList>
    </citation>
    <scope>NUCLEOTIDE SEQUENCE [LARGE SCALE GENOMIC DNA]</scope>
    <source>
        <strain>cv. Nipponbare</strain>
    </source>
</reference>
<reference key="2">
    <citation type="journal article" date="2008" name="Nucleic Acids Res.">
        <title>The rice annotation project database (RAP-DB): 2008 update.</title>
        <authorList>
            <consortium name="The rice annotation project (RAP)"/>
        </authorList>
    </citation>
    <scope>GENOME REANNOTATION</scope>
    <source>
        <strain>cv. Nipponbare</strain>
    </source>
</reference>
<reference key="3">
    <citation type="journal article" date="2013" name="Rice">
        <title>Improvement of the Oryza sativa Nipponbare reference genome using next generation sequence and optical map data.</title>
        <authorList>
            <person name="Kawahara Y."/>
            <person name="de la Bastide M."/>
            <person name="Hamilton J.P."/>
            <person name="Kanamori H."/>
            <person name="McCombie W.R."/>
            <person name="Ouyang S."/>
            <person name="Schwartz D.C."/>
            <person name="Tanaka T."/>
            <person name="Wu J."/>
            <person name="Zhou S."/>
            <person name="Childs K.L."/>
            <person name="Davidson R.M."/>
            <person name="Lin H."/>
            <person name="Quesada-Ocampo L."/>
            <person name="Vaillancourt B."/>
            <person name="Sakai H."/>
            <person name="Lee S.S."/>
            <person name="Kim J."/>
            <person name="Numa H."/>
            <person name="Itoh T."/>
            <person name="Buell C.R."/>
            <person name="Matsumoto T."/>
        </authorList>
    </citation>
    <scope>GENOME REANNOTATION</scope>
    <source>
        <strain>cv. Nipponbare</strain>
    </source>
</reference>
<reference key="4">
    <citation type="journal article" date="2005" name="PLoS Biol.">
        <title>The genomes of Oryza sativa: a history of duplications.</title>
        <authorList>
            <person name="Yu J."/>
            <person name="Wang J."/>
            <person name="Lin W."/>
            <person name="Li S."/>
            <person name="Li H."/>
            <person name="Zhou J."/>
            <person name="Ni P."/>
            <person name="Dong W."/>
            <person name="Hu S."/>
            <person name="Zeng C."/>
            <person name="Zhang J."/>
            <person name="Zhang Y."/>
            <person name="Li R."/>
            <person name="Xu Z."/>
            <person name="Li S."/>
            <person name="Li X."/>
            <person name="Zheng H."/>
            <person name="Cong L."/>
            <person name="Lin L."/>
            <person name="Yin J."/>
            <person name="Geng J."/>
            <person name="Li G."/>
            <person name="Shi J."/>
            <person name="Liu J."/>
            <person name="Lv H."/>
            <person name="Li J."/>
            <person name="Wang J."/>
            <person name="Deng Y."/>
            <person name="Ran L."/>
            <person name="Shi X."/>
            <person name="Wang X."/>
            <person name="Wu Q."/>
            <person name="Li C."/>
            <person name="Ren X."/>
            <person name="Wang J."/>
            <person name="Wang X."/>
            <person name="Li D."/>
            <person name="Liu D."/>
            <person name="Zhang X."/>
            <person name="Ji Z."/>
            <person name="Zhao W."/>
            <person name="Sun Y."/>
            <person name="Zhang Z."/>
            <person name="Bao J."/>
            <person name="Han Y."/>
            <person name="Dong L."/>
            <person name="Ji J."/>
            <person name="Chen P."/>
            <person name="Wu S."/>
            <person name="Liu J."/>
            <person name="Xiao Y."/>
            <person name="Bu D."/>
            <person name="Tan J."/>
            <person name="Yang L."/>
            <person name="Ye C."/>
            <person name="Zhang J."/>
            <person name="Xu J."/>
            <person name="Zhou Y."/>
            <person name="Yu Y."/>
            <person name="Zhang B."/>
            <person name="Zhuang S."/>
            <person name="Wei H."/>
            <person name="Liu B."/>
            <person name="Lei M."/>
            <person name="Yu H."/>
            <person name="Li Y."/>
            <person name="Xu H."/>
            <person name="Wei S."/>
            <person name="He X."/>
            <person name="Fang L."/>
            <person name="Zhang Z."/>
            <person name="Zhang Y."/>
            <person name="Huang X."/>
            <person name="Su Z."/>
            <person name="Tong W."/>
            <person name="Li J."/>
            <person name="Tong Z."/>
            <person name="Li S."/>
            <person name="Ye J."/>
            <person name="Wang L."/>
            <person name="Fang L."/>
            <person name="Lei T."/>
            <person name="Chen C.-S."/>
            <person name="Chen H.-C."/>
            <person name="Xu Z."/>
            <person name="Li H."/>
            <person name="Huang H."/>
            <person name="Zhang F."/>
            <person name="Xu H."/>
            <person name="Li N."/>
            <person name="Zhao C."/>
            <person name="Li S."/>
            <person name="Dong L."/>
            <person name="Huang Y."/>
            <person name="Li L."/>
            <person name="Xi Y."/>
            <person name="Qi Q."/>
            <person name="Li W."/>
            <person name="Zhang B."/>
            <person name="Hu W."/>
            <person name="Zhang Y."/>
            <person name="Tian X."/>
            <person name="Jiao Y."/>
            <person name="Liang X."/>
            <person name="Jin J."/>
            <person name="Gao L."/>
            <person name="Zheng W."/>
            <person name="Hao B."/>
            <person name="Liu S.-M."/>
            <person name="Wang W."/>
            <person name="Yuan L."/>
            <person name="Cao M."/>
            <person name="McDermott J."/>
            <person name="Samudrala R."/>
            <person name="Wang J."/>
            <person name="Wong G.K.-S."/>
            <person name="Yang H."/>
        </authorList>
    </citation>
    <scope>NUCLEOTIDE SEQUENCE [LARGE SCALE GENOMIC DNA]</scope>
    <source>
        <strain>cv. Nipponbare</strain>
    </source>
</reference>
<reference key="5">
    <citation type="journal article" date="2003" name="Science">
        <title>Collection, mapping, and annotation of over 28,000 cDNA clones from japonica rice.</title>
        <authorList>
            <consortium name="The rice full-length cDNA consortium"/>
        </authorList>
    </citation>
    <scope>NUCLEOTIDE SEQUENCE [LARGE SCALE MRNA]</scope>
    <source>
        <strain>cv. Nipponbare</strain>
    </source>
</reference>
<gene>
    <name type="primary">URH1</name>
    <name type="ordered locus">Os08g0557900</name>
    <name type="ordered locus">LOC_Os08g44370</name>
    <name type="ORF">OJ1150_A11.30</name>
    <name type="ORF">OsJ_28263</name>
</gene>
<organism>
    <name type="scientific">Oryza sativa subsp. japonica</name>
    <name type="common">Rice</name>
    <dbReference type="NCBI Taxonomy" id="39947"/>
    <lineage>
        <taxon>Eukaryota</taxon>
        <taxon>Viridiplantae</taxon>
        <taxon>Streptophyta</taxon>
        <taxon>Embryophyta</taxon>
        <taxon>Tracheophyta</taxon>
        <taxon>Spermatophyta</taxon>
        <taxon>Magnoliopsida</taxon>
        <taxon>Liliopsida</taxon>
        <taxon>Poales</taxon>
        <taxon>Poaceae</taxon>
        <taxon>BOP clade</taxon>
        <taxon>Oryzoideae</taxon>
        <taxon>Oryzeae</taxon>
        <taxon>Oryzinae</taxon>
        <taxon>Oryza</taxon>
        <taxon>Oryza sativa</taxon>
    </lineage>
</organism>
<name>URH1_ORYSJ</name>
<keyword id="KW-0963">Cytoplasm</keyword>
<keyword id="KW-0326">Glycosidase</keyword>
<keyword id="KW-0378">Hydrolase</keyword>
<keyword id="KW-1185">Reference proteome</keyword>
<evidence type="ECO:0000250" key="1"/>
<evidence type="ECO:0000305" key="2"/>
<comment type="function">
    <text evidence="1">Involved in pyrimidine breakdown.</text>
</comment>
<comment type="catalytic activity">
    <reaction>
        <text>uridine + H2O = D-ribose + uracil</text>
        <dbReference type="Rhea" id="RHEA:15577"/>
        <dbReference type="ChEBI" id="CHEBI:15377"/>
        <dbReference type="ChEBI" id="CHEBI:16704"/>
        <dbReference type="ChEBI" id="CHEBI:17568"/>
        <dbReference type="ChEBI" id="CHEBI:47013"/>
        <dbReference type="EC" id="3.2.2.3"/>
    </reaction>
</comment>
<comment type="subcellular location">
    <subcellularLocation>
        <location evidence="1">Cytoplasm</location>
    </subcellularLocation>
</comment>
<comment type="similarity">
    <text evidence="2">Belongs to the IUNH family.</text>
</comment>
<proteinExistence type="evidence at transcript level"/>
<sequence length="324" mass="35019">MGSNEQIHRDKLIIDTDPGIDDSMTILMAFRAPTVEIIGLTTIFGNTTTKNATQNALLLCERAGHPEVPVAEGSAEPLKGGEPRVADFVHGSDGLGNLFLPAPTSKKVDENAAEFMVNKVSQFPGEVSILALGPLTNVALAIKRDPSFASKVKKIVVLGGAFFAAGNVSPAAEANIYGDPEAADIVFTSGADVDVVGINITTQVCFTDEDLLELRNSKGKHAQFLCDMCQFYRDWHAESDGFHGIFLHDPVSFTALVHPEYFTFKKGVVRVETQGICTGHTLMDQGLKKWNSENPWSGYKPISVAWTVDVPNVLAFVKELLMAP</sequence>
<dbReference type="EC" id="3.2.2.3"/>
<dbReference type="EMBL" id="AP003928">
    <property type="protein sequence ID" value="BAD09089.1"/>
    <property type="molecule type" value="Genomic_DNA"/>
</dbReference>
<dbReference type="EMBL" id="AP008214">
    <property type="protein sequence ID" value="BAF24403.1"/>
    <property type="molecule type" value="Genomic_DNA"/>
</dbReference>
<dbReference type="EMBL" id="AP014964">
    <property type="protein sequence ID" value="BAT06671.1"/>
    <property type="molecule type" value="Genomic_DNA"/>
</dbReference>
<dbReference type="EMBL" id="CM000145">
    <property type="protein sequence ID" value="EEE69140.1"/>
    <property type="molecule type" value="Genomic_DNA"/>
</dbReference>
<dbReference type="EMBL" id="AK065324">
    <property type="protein sequence ID" value="BAG89467.1"/>
    <property type="molecule type" value="mRNA"/>
</dbReference>
<dbReference type="RefSeq" id="XP_015650264.1">
    <property type="nucleotide sequence ID" value="XM_015794778.1"/>
</dbReference>
<dbReference type="SMR" id="Q6ZJ05"/>
<dbReference type="FunCoup" id="Q6ZJ05">
    <property type="interactions" value="920"/>
</dbReference>
<dbReference type="STRING" id="39947.Q6ZJ05"/>
<dbReference type="PaxDb" id="39947-Q6ZJ05"/>
<dbReference type="EnsemblPlants" id="Os08t0557900-01">
    <property type="protein sequence ID" value="Os08t0557900-01"/>
    <property type="gene ID" value="Os08g0557900"/>
</dbReference>
<dbReference type="Gramene" id="Os08t0557900-01">
    <property type="protein sequence ID" value="Os08t0557900-01"/>
    <property type="gene ID" value="Os08g0557900"/>
</dbReference>
<dbReference type="KEGG" id="dosa:Os08g0557900"/>
<dbReference type="eggNOG" id="KOG2938">
    <property type="taxonomic scope" value="Eukaryota"/>
</dbReference>
<dbReference type="HOGENOM" id="CLU_036838_2_1_1"/>
<dbReference type="InParanoid" id="Q6ZJ05"/>
<dbReference type="OMA" id="WVGVETK"/>
<dbReference type="OrthoDB" id="432381at2759"/>
<dbReference type="Proteomes" id="UP000000763">
    <property type="component" value="Chromosome 8"/>
</dbReference>
<dbReference type="Proteomes" id="UP000007752">
    <property type="component" value="Chromosome 8"/>
</dbReference>
<dbReference type="Proteomes" id="UP000059680">
    <property type="component" value="Chromosome 8"/>
</dbReference>
<dbReference type="GO" id="GO:0005829">
    <property type="term" value="C:cytosol"/>
    <property type="evidence" value="ECO:0000318"/>
    <property type="project" value="GO_Central"/>
</dbReference>
<dbReference type="GO" id="GO:0008477">
    <property type="term" value="F:purine nucleosidase activity"/>
    <property type="evidence" value="ECO:0000318"/>
    <property type="project" value="GO_Central"/>
</dbReference>
<dbReference type="GO" id="GO:0045437">
    <property type="term" value="F:uridine nucleosidase activity"/>
    <property type="evidence" value="ECO:0007669"/>
    <property type="project" value="UniProtKB-EC"/>
</dbReference>
<dbReference type="GO" id="GO:0006152">
    <property type="term" value="P:purine nucleoside catabolic process"/>
    <property type="evidence" value="ECO:0000318"/>
    <property type="project" value="GO_Central"/>
</dbReference>
<dbReference type="CDD" id="cd02650">
    <property type="entry name" value="nuc_hydro_CaPnhB"/>
    <property type="match status" value="1"/>
</dbReference>
<dbReference type="FunFam" id="3.90.245.10:FF:000004">
    <property type="entry name" value="Probable uridine nucleosidase 1"/>
    <property type="match status" value="1"/>
</dbReference>
<dbReference type="Gene3D" id="3.90.245.10">
    <property type="entry name" value="Ribonucleoside hydrolase-like"/>
    <property type="match status" value="1"/>
</dbReference>
<dbReference type="InterPro" id="IPR001910">
    <property type="entry name" value="Inosine/uridine_hydrolase_dom"/>
</dbReference>
<dbReference type="InterPro" id="IPR023186">
    <property type="entry name" value="IUNH"/>
</dbReference>
<dbReference type="InterPro" id="IPR036452">
    <property type="entry name" value="Ribo_hydro-like"/>
</dbReference>
<dbReference type="PANTHER" id="PTHR12304">
    <property type="entry name" value="INOSINE-URIDINE PREFERRING NUCLEOSIDE HYDROLASE"/>
    <property type="match status" value="1"/>
</dbReference>
<dbReference type="PANTHER" id="PTHR12304:SF1">
    <property type="entry name" value="URIDINE NUCLEOSIDASE 1"/>
    <property type="match status" value="1"/>
</dbReference>
<dbReference type="Pfam" id="PF01156">
    <property type="entry name" value="IU_nuc_hydro"/>
    <property type="match status" value="1"/>
</dbReference>
<dbReference type="SUPFAM" id="SSF53590">
    <property type="entry name" value="Nucleoside hydrolase"/>
    <property type="match status" value="1"/>
</dbReference>
<feature type="chain" id="PRO_0000394504" description="Probable uridine nucleosidase 1">
    <location>
        <begin position="1"/>
        <end position="324"/>
    </location>
</feature>
<feature type="active site" evidence="1">
    <location>
        <position position="248"/>
    </location>
</feature>
<protein>
    <recommendedName>
        <fullName>Probable uridine nucleosidase 1</fullName>
        <ecNumber>3.2.2.3</ecNumber>
    </recommendedName>
    <alternativeName>
        <fullName>Uridine ribohydrolase 1</fullName>
    </alternativeName>
</protein>